<accession>Q3AB61</accession>
<protein>
    <recommendedName>
        <fullName evidence="1">L-seryl-tRNA(Sec) selenium transferase</fullName>
        <ecNumber evidence="1">2.9.1.1</ecNumber>
    </recommendedName>
    <alternativeName>
        <fullName evidence="1">Selenocysteine synthase</fullName>
        <shortName evidence="1">Sec synthase</shortName>
    </alternativeName>
    <alternativeName>
        <fullName evidence="1">Selenocysteinyl-tRNA(Sec) synthase</fullName>
    </alternativeName>
</protein>
<proteinExistence type="inferred from homology"/>
<sequence length="466" mass="51867">MALEKLLRSIPKVDEILKAPELQDYLNRYQREIITRKVREVLDELRTGIVSGQRQKPLEFQEVVNLAQRKIESFFLPPYRRVVNGTGVVLHTNLGRAPLAPEAVEALRKVSGSYGNLELDLTTGKRGSRYDHVVEYLCELTGAEDALVVNNNASAVVLALSSMAFGKEVIVSRGQLVEIGGAFRIPEIMERSGAILKEVGTTNKTRIDDYRKAINENTGLLLGVHTSNYKIIGFTESVEIADLVKLGKEKGIPVMWDLGSGSLVDLTSYGLPYEPTVQEVLAAGVDVVTFSGDKLLGGPQAGIIAGKKEFVAKMKKHPLTRAIRIDKMTVAALQATLMLYFERDFLSKIPVLRMLTEPPEKIKKRAQKLYRKLLRAKLPAEISLDEGKSEVGGGAFPGTYLSSYVIKINPHHLSVEKLAKALREENPALLGRIEEEKFIIDLRTVLEEEIDYCKRLLEKHLVGDRQ</sequence>
<gene>
    <name evidence="1" type="primary">selA</name>
    <name type="ordered locus">CHY_1803</name>
</gene>
<reference key="1">
    <citation type="journal article" date="2005" name="PLoS Genet.">
        <title>Life in hot carbon monoxide: the complete genome sequence of Carboxydothermus hydrogenoformans Z-2901.</title>
        <authorList>
            <person name="Wu M."/>
            <person name="Ren Q."/>
            <person name="Durkin A.S."/>
            <person name="Daugherty S.C."/>
            <person name="Brinkac L.M."/>
            <person name="Dodson R.J."/>
            <person name="Madupu R."/>
            <person name="Sullivan S.A."/>
            <person name="Kolonay J.F."/>
            <person name="Nelson W.C."/>
            <person name="Tallon L.J."/>
            <person name="Jones K.M."/>
            <person name="Ulrich L.E."/>
            <person name="Gonzalez J.M."/>
            <person name="Zhulin I.B."/>
            <person name="Robb F.T."/>
            <person name="Eisen J.A."/>
        </authorList>
    </citation>
    <scope>NUCLEOTIDE SEQUENCE [LARGE SCALE GENOMIC DNA]</scope>
    <source>
        <strain>ATCC BAA-161 / DSM 6008 / Z-2901</strain>
    </source>
</reference>
<organism>
    <name type="scientific">Carboxydothermus hydrogenoformans (strain ATCC BAA-161 / DSM 6008 / Z-2901)</name>
    <dbReference type="NCBI Taxonomy" id="246194"/>
    <lineage>
        <taxon>Bacteria</taxon>
        <taxon>Bacillati</taxon>
        <taxon>Bacillota</taxon>
        <taxon>Clostridia</taxon>
        <taxon>Thermoanaerobacterales</taxon>
        <taxon>Thermoanaerobacteraceae</taxon>
        <taxon>Carboxydothermus</taxon>
    </lineage>
</organism>
<name>SELA_CARHZ</name>
<keyword id="KW-0963">Cytoplasm</keyword>
<keyword id="KW-0648">Protein biosynthesis</keyword>
<keyword id="KW-0663">Pyridoxal phosphate</keyword>
<keyword id="KW-1185">Reference proteome</keyword>
<keyword id="KW-0711">Selenium</keyword>
<keyword id="KW-0808">Transferase</keyword>
<dbReference type="EC" id="2.9.1.1" evidence="1"/>
<dbReference type="EMBL" id="CP000141">
    <property type="protein sequence ID" value="ABB15320.1"/>
    <property type="molecule type" value="Genomic_DNA"/>
</dbReference>
<dbReference type="RefSeq" id="WP_011344697.1">
    <property type="nucleotide sequence ID" value="NC_007503.1"/>
</dbReference>
<dbReference type="SMR" id="Q3AB61"/>
<dbReference type="STRING" id="246194.CHY_1803"/>
<dbReference type="KEGG" id="chy:CHY_1803"/>
<dbReference type="eggNOG" id="COG1921">
    <property type="taxonomic scope" value="Bacteria"/>
</dbReference>
<dbReference type="HOGENOM" id="CLU_038142_1_0_9"/>
<dbReference type="InParanoid" id="Q3AB61"/>
<dbReference type="OrthoDB" id="9787096at2"/>
<dbReference type="UniPathway" id="UPA00906">
    <property type="reaction ID" value="UER00896"/>
</dbReference>
<dbReference type="Proteomes" id="UP000002706">
    <property type="component" value="Chromosome"/>
</dbReference>
<dbReference type="GO" id="GO:0005737">
    <property type="term" value="C:cytoplasm"/>
    <property type="evidence" value="ECO:0007669"/>
    <property type="project" value="UniProtKB-SubCell"/>
</dbReference>
<dbReference type="GO" id="GO:0004125">
    <property type="term" value="F:L-seryl-tRNA(Sec) selenium transferase activity"/>
    <property type="evidence" value="ECO:0007669"/>
    <property type="project" value="UniProtKB-UniRule"/>
</dbReference>
<dbReference type="GO" id="GO:0001717">
    <property type="term" value="P:conversion of seryl-tRNAsec to selenocys-tRNAsec"/>
    <property type="evidence" value="ECO:0007669"/>
    <property type="project" value="UniProtKB-UniRule"/>
</dbReference>
<dbReference type="GO" id="GO:0001514">
    <property type="term" value="P:selenocysteine incorporation"/>
    <property type="evidence" value="ECO:0007669"/>
    <property type="project" value="UniProtKB-UniRule"/>
</dbReference>
<dbReference type="Gene3D" id="3.90.1150.180">
    <property type="match status" value="1"/>
</dbReference>
<dbReference type="Gene3D" id="3.40.640.10">
    <property type="entry name" value="Type I PLP-dependent aspartate aminotransferase-like (Major domain)"/>
    <property type="match status" value="1"/>
</dbReference>
<dbReference type="HAMAP" id="MF_00423">
    <property type="entry name" value="SelA"/>
    <property type="match status" value="1"/>
</dbReference>
<dbReference type="InterPro" id="IPR015424">
    <property type="entry name" value="PyrdxlP-dep_Trfase"/>
</dbReference>
<dbReference type="InterPro" id="IPR015421">
    <property type="entry name" value="PyrdxlP-dep_Trfase_major"/>
</dbReference>
<dbReference type="InterPro" id="IPR018319">
    <property type="entry name" value="SelA-like"/>
</dbReference>
<dbReference type="InterPro" id="IPR004534">
    <property type="entry name" value="SelA_trans"/>
</dbReference>
<dbReference type="InterPro" id="IPR025862">
    <property type="entry name" value="SelA_trans_N_dom"/>
</dbReference>
<dbReference type="NCBIfam" id="TIGR00474">
    <property type="entry name" value="selA"/>
    <property type="match status" value="1"/>
</dbReference>
<dbReference type="PANTHER" id="PTHR32328">
    <property type="entry name" value="L-SERYL-TRNA(SEC) SELENIUM TRANSFERASE"/>
    <property type="match status" value="1"/>
</dbReference>
<dbReference type="PANTHER" id="PTHR32328:SF0">
    <property type="entry name" value="L-SERYL-TRNA(SEC) SELENIUM TRANSFERASE"/>
    <property type="match status" value="1"/>
</dbReference>
<dbReference type="Pfam" id="PF12390">
    <property type="entry name" value="Se-cys_synth_N"/>
    <property type="match status" value="1"/>
</dbReference>
<dbReference type="Pfam" id="PF03841">
    <property type="entry name" value="SelA"/>
    <property type="match status" value="1"/>
</dbReference>
<dbReference type="SUPFAM" id="SSF53383">
    <property type="entry name" value="PLP-dependent transferases"/>
    <property type="match status" value="1"/>
</dbReference>
<comment type="function">
    <text evidence="1">Converts seryl-tRNA(Sec) to selenocysteinyl-tRNA(Sec) required for selenoprotein biosynthesis.</text>
</comment>
<comment type="catalytic activity">
    <reaction evidence="1">
        <text>L-seryl-tRNA(Sec) + selenophosphate + H(+) = L-selenocysteinyl-tRNA(Sec) + phosphate</text>
        <dbReference type="Rhea" id="RHEA:22728"/>
        <dbReference type="Rhea" id="RHEA-COMP:9742"/>
        <dbReference type="Rhea" id="RHEA-COMP:9743"/>
        <dbReference type="ChEBI" id="CHEBI:15378"/>
        <dbReference type="ChEBI" id="CHEBI:16144"/>
        <dbReference type="ChEBI" id="CHEBI:43474"/>
        <dbReference type="ChEBI" id="CHEBI:78533"/>
        <dbReference type="ChEBI" id="CHEBI:78573"/>
        <dbReference type="EC" id="2.9.1.1"/>
    </reaction>
</comment>
<comment type="cofactor">
    <cofactor evidence="1">
        <name>pyridoxal 5'-phosphate</name>
        <dbReference type="ChEBI" id="CHEBI:597326"/>
    </cofactor>
</comment>
<comment type="pathway">
    <text evidence="1">Aminoacyl-tRNA biosynthesis; selenocysteinyl-tRNA(Sec) biosynthesis; selenocysteinyl-tRNA(Sec) from L-seryl-tRNA(Sec) (bacterial route): step 1/1.</text>
</comment>
<comment type="subcellular location">
    <subcellularLocation>
        <location evidence="1">Cytoplasm</location>
    </subcellularLocation>
</comment>
<comment type="similarity">
    <text evidence="1">Belongs to the SelA family.</text>
</comment>
<feature type="chain" id="PRO_1000072303" description="L-seryl-tRNA(Sec) selenium transferase">
    <location>
        <begin position="1"/>
        <end position="466"/>
    </location>
</feature>
<feature type="modified residue" description="N6-(pyridoxal phosphate)lysine" evidence="1">
    <location>
        <position position="294"/>
    </location>
</feature>
<evidence type="ECO:0000255" key="1">
    <source>
        <dbReference type="HAMAP-Rule" id="MF_00423"/>
    </source>
</evidence>